<proteinExistence type="inferred from homology"/>
<organism>
    <name type="scientific">Streptococcus suis (strain 05ZYH33)</name>
    <dbReference type="NCBI Taxonomy" id="391295"/>
    <lineage>
        <taxon>Bacteria</taxon>
        <taxon>Bacillati</taxon>
        <taxon>Bacillota</taxon>
        <taxon>Bacilli</taxon>
        <taxon>Lactobacillales</taxon>
        <taxon>Streptococcaceae</taxon>
        <taxon>Streptococcus</taxon>
    </lineage>
</organism>
<dbReference type="EC" id="3.6.1.27" evidence="1"/>
<dbReference type="EMBL" id="CP000407">
    <property type="protein sequence ID" value="ABP90845.1"/>
    <property type="molecule type" value="Genomic_DNA"/>
</dbReference>
<dbReference type="SMR" id="A4VXK6"/>
<dbReference type="STRING" id="391295.SSU05_1879"/>
<dbReference type="KEGG" id="ssu:SSU05_1879"/>
<dbReference type="eggNOG" id="COG1968">
    <property type="taxonomic scope" value="Bacteria"/>
</dbReference>
<dbReference type="HOGENOM" id="CLU_060296_2_0_9"/>
<dbReference type="GO" id="GO:0005886">
    <property type="term" value="C:plasma membrane"/>
    <property type="evidence" value="ECO:0007669"/>
    <property type="project" value="UniProtKB-SubCell"/>
</dbReference>
<dbReference type="GO" id="GO:0050380">
    <property type="term" value="F:undecaprenyl-diphosphatase activity"/>
    <property type="evidence" value="ECO:0007669"/>
    <property type="project" value="UniProtKB-UniRule"/>
</dbReference>
<dbReference type="GO" id="GO:0071555">
    <property type="term" value="P:cell wall organization"/>
    <property type="evidence" value="ECO:0007669"/>
    <property type="project" value="UniProtKB-KW"/>
</dbReference>
<dbReference type="GO" id="GO:0009252">
    <property type="term" value="P:peptidoglycan biosynthetic process"/>
    <property type="evidence" value="ECO:0007669"/>
    <property type="project" value="UniProtKB-KW"/>
</dbReference>
<dbReference type="GO" id="GO:0008360">
    <property type="term" value="P:regulation of cell shape"/>
    <property type="evidence" value="ECO:0007669"/>
    <property type="project" value="UniProtKB-KW"/>
</dbReference>
<dbReference type="GO" id="GO:0046677">
    <property type="term" value="P:response to antibiotic"/>
    <property type="evidence" value="ECO:0007669"/>
    <property type="project" value="UniProtKB-UniRule"/>
</dbReference>
<dbReference type="HAMAP" id="MF_01006">
    <property type="entry name" value="Undec_diphosphatase"/>
    <property type="match status" value="1"/>
</dbReference>
<dbReference type="InterPro" id="IPR003824">
    <property type="entry name" value="UppP"/>
</dbReference>
<dbReference type="NCBIfam" id="NF001390">
    <property type="entry name" value="PRK00281.1-4"/>
    <property type="match status" value="1"/>
</dbReference>
<dbReference type="NCBIfam" id="NF001391">
    <property type="entry name" value="PRK00281.1-5"/>
    <property type="match status" value="1"/>
</dbReference>
<dbReference type="PANTHER" id="PTHR30622">
    <property type="entry name" value="UNDECAPRENYL-DIPHOSPHATASE"/>
    <property type="match status" value="1"/>
</dbReference>
<dbReference type="PANTHER" id="PTHR30622:SF3">
    <property type="entry name" value="UNDECAPRENYL-DIPHOSPHATASE"/>
    <property type="match status" value="1"/>
</dbReference>
<dbReference type="Pfam" id="PF02673">
    <property type="entry name" value="BacA"/>
    <property type="match status" value="1"/>
</dbReference>
<name>UPPP_STRSY</name>
<comment type="function">
    <text evidence="1">Catalyzes the dephosphorylation of undecaprenyl diphosphate (UPP). Confers resistance to bacitracin.</text>
</comment>
<comment type="catalytic activity">
    <reaction evidence="1">
        <text>di-trans,octa-cis-undecaprenyl diphosphate + H2O = di-trans,octa-cis-undecaprenyl phosphate + phosphate + H(+)</text>
        <dbReference type="Rhea" id="RHEA:28094"/>
        <dbReference type="ChEBI" id="CHEBI:15377"/>
        <dbReference type="ChEBI" id="CHEBI:15378"/>
        <dbReference type="ChEBI" id="CHEBI:43474"/>
        <dbReference type="ChEBI" id="CHEBI:58405"/>
        <dbReference type="ChEBI" id="CHEBI:60392"/>
        <dbReference type="EC" id="3.6.1.27"/>
    </reaction>
</comment>
<comment type="subcellular location">
    <subcellularLocation>
        <location evidence="1">Cell membrane</location>
        <topology evidence="1">Multi-pass membrane protein</topology>
    </subcellularLocation>
</comment>
<comment type="miscellaneous">
    <text>Bacitracin is thought to be involved in the inhibition of peptidoglycan synthesis by sequestering undecaprenyl diphosphate, thereby reducing the pool of lipid carrier available.</text>
</comment>
<comment type="similarity">
    <text evidence="1">Belongs to the UppP family.</text>
</comment>
<gene>
    <name evidence="1" type="primary">uppP</name>
    <name type="ordered locus">SSU05_1879</name>
</gene>
<protein>
    <recommendedName>
        <fullName evidence="1">Undecaprenyl-diphosphatase</fullName>
        <ecNumber evidence="1">3.6.1.27</ecNumber>
    </recommendedName>
    <alternativeName>
        <fullName evidence="1">Bacitracin resistance protein</fullName>
    </alternativeName>
    <alternativeName>
        <fullName evidence="1">Undecaprenyl pyrophosphate phosphatase</fullName>
    </alternativeName>
</protein>
<evidence type="ECO:0000255" key="1">
    <source>
        <dbReference type="HAMAP-Rule" id="MF_01006"/>
    </source>
</evidence>
<keyword id="KW-0046">Antibiotic resistance</keyword>
<keyword id="KW-1003">Cell membrane</keyword>
<keyword id="KW-0133">Cell shape</keyword>
<keyword id="KW-0961">Cell wall biogenesis/degradation</keyword>
<keyword id="KW-0378">Hydrolase</keyword>
<keyword id="KW-0472">Membrane</keyword>
<keyword id="KW-0573">Peptidoglycan synthesis</keyword>
<keyword id="KW-0812">Transmembrane</keyword>
<keyword id="KW-1133">Transmembrane helix</keyword>
<accession>A4VXK6</accession>
<feature type="chain" id="PRO_0000303035" description="Undecaprenyl-diphosphatase">
    <location>
        <begin position="1"/>
        <end position="278"/>
    </location>
</feature>
<feature type="transmembrane region" description="Helical" evidence="1">
    <location>
        <begin position="44"/>
        <end position="64"/>
    </location>
</feature>
<feature type="transmembrane region" description="Helical" evidence="1">
    <location>
        <begin position="84"/>
        <end position="104"/>
    </location>
</feature>
<feature type="transmembrane region" description="Helical" evidence="1">
    <location>
        <begin position="112"/>
        <end position="132"/>
    </location>
</feature>
<feature type="transmembrane region" description="Helical" evidence="1">
    <location>
        <begin position="187"/>
        <end position="207"/>
    </location>
</feature>
<feature type="transmembrane region" description="Helical" evidence="1">
    <location>
        <begin position="224"/>
        <end position="244"/>
    </location>
</feature>
<feature type="transmembrane region" description="Helical" evidence="1">
    <location>
        <begin position="254"/>
        <end position="274"/>
    </location>
</feature>
<reference key="1">
    <citation type="journal article" date="2007" name="PLoS ONE">
        <title>A glimpse of streptococcal toxic shock syndrome from comparative genomics of S. suis 2 Chinese isolates.</title>
        <authorList>
            <person name="Chen C."/>
            <person name="Tang J."/>
            <person name="Dong W."/>
            <person name="Wang C."/>
            <person name="Feng Y."/>
            <person name="Wang J."/>
            <person name="Zheng F."/>
            <person name="Pan X."/>
            <person name="Liu D."/>
            <person name="Li M."/>
            <person name="Song Y."/>
            <person name="Zhu X."/>
            <person name="Sun H."/>
            <person name="Feng T."/>
            <person name="Guo Z."/>
            <person name="Ju A."/>
            <person name="Ge J."/>
            <person name="Dong Y."/>
            <person name="Sun W."/>
            <person name="Jiang Y."/>
            <person name="Wang J."/>
            <person name="Yan J."/>
            <person name="Yang H."/>
            <person name="Wang X."/>
            <person name="Gao G.F."/>
            <person name="Yang R."/>
            <person name="Wang J."/>
            <person name="Yu J."/>
        </authorList>
    </citation>
    <scope>NUCLEOTIDE SEQUENCE [LARGE SCALE GENOMIC DNA]</scope>
    <source>
        <strain>05ZYH33</strain>
    </source>
</reference>
<sequence length="278" mass="31191">MLLELLKAIFLGIIEGVTEWLPVSSTGHLILVQEFVKLNQSKNFLEMFNIVIQLGAILAVMTIYFKKLNPFQPGKTKRDIQLTWQLWAKVVIACIPSILIAVPLDNWFEAHFNFMVPIAIALIVYGIAFIWIENRNRGIEPQVTDLAKMSYKTALLIGCFQVLSIVPGTSRSGATILGAIILGTSRSVAADFTFFLGIPTMFGYSGLKAVKYFLDGNSLNMEQVWILLVASVTAYLVSLVVIRFLTDFVKKHDFTVFGYYRIILGAILLVYAFITFLF</sequence>